<accession>A4VJ70</accession>
<proteinExistence type="inferred from homology"/>
<comment type="function">
    <text evidence="1">The key enzymatic reactions in nitrogen fixation are catalyzed by the nitrogenase complex, which has 2 components: the iron protein and the molybdenum-iron protein.</text>
</comment>
<comment type="catalytic activity">
    <reaction evidence="1">
        <text>N2 + 8 reduced [2Fe-2S]-[ferredoxin] + 16 ATP + 16 H2O = H2 + 8 oxidized [2Fe-2S]-[ferredoxin] + 2 NH4(+) + 16 ADP + 16 phosphate + 6 H(+)</text>
        <dbReference type="Rhea" id="RHEA:21448"/>
        <dbReference type="Rhea" id="RHEA-COMP:10000"/>
        <dbReference type="Rhea" id="RHEA-COMP:10001"/>
        <dbReference type="ChEBI" id="CHEBI:15377"/>
        <dbReference type="ChEBI" id="CHEBI:15378"/>
        <dbReference type="ChEBI" id="CHEBI:17997"/>
        <dbReference type="ChEBI" id="CHEBI:18276"/>
        <dbReference type="ChEBI" id="CHEBI:28938"/>
        <dbReference type="ChEBI" id="CHEBI:30616"/>
        <dbReference type="ChEBI" id="CHEBI:33737"/>
        <dbReference type="ChEBI" id="CHEBI:33738"/>
        <dbReference type="ChEBI" id="CHEBI:43474"/>
        <dbReference type="ChEBI" id="CHEBI:456216"/>
        <dbReference type="EC" id="1.18.6.1"/>
    </reaction>
</comment>
<comment type="cofactor">
    <cofactor evidence="1">
        <name>[4Fe-4S] cluster</name>
        <dbReference type="ChEBI" id="CHEBI:49883"/>
    </cofactor>
    <text evidence="1">Binds 1 [4Fe-4S] cluster per dimer.</text>
</comment>
<comment type="subunit">
    <text evidence="1">Homodimer.</text>
</comment>
<comment type="PTM">
    <text evidence="1">The reversible ADP-ribosylation of Arg-101 inactivates the nitrogenase reductase and regulates nitrogenase activity.</text>
</comment>
<comment type="similarity">
    <text evidence="1">Belongs to the NifH/BchL/ChlL family.</text>
</comment>
<reference key="1">
    <citation type="journal article" date="2008" name="Proc. Natl. Acad. Sci. U.S.A.">
        <title>Nitrogen fixation island and rhizosphere competence traits in the genome of root-associated Pseudomonas stutzeri A1501.</title>
        <authorList>
            <person name="Yan Y."/>
            <person name="Yang J."/>
            <person name="Dou Y."/>
            <person name="Chen M."/>
            <person name="Ping S."/>
            <person name="Peng J."/>
            <person name="Lu W."/>
            <person name="Zhang W."/>
            <person name="Yao Z."/>
            <person name="Li H."/>
            <person name="Liu W."/>
            <person name="He S."/>
            <person name="Geng L."/>
            <person name="Zhang X."/>
            <person name="Yang F."/>
            <person name="Yu H."/>
            <person name="Zhan Y."/>
            <person name="Li D."/>
            <person name="Lin Z."/>
            <person name="Wang Y."/>
            <person name="Elmerich C."/>
            <person name="Lin M."/>
            <person name="Jin Q."/>
        </authorList>
    </citation>
    <scope>NUCLEOTIDE SEQUENCE [LARGE SCALE GENOMIC DNA]</scope>
    <source>
        <strain>A1501</strain>
    </source>
</reference>
<name>NIFH_STUS1</name>
<protein>
    <recommendedName>
        <fullName evidence="1">Nitrogenase iron protein</fullName>
        <ecNumber evidence="1">1.18.6.1</ecNumber>
    </recommendedName>
    <alternativeName>
        <fullName evidence="1">Nitrogenase Fe protein</fullName>
    </alternativeName>
    <alternativeName>
        <fullName evidence="1">Nitrogenase component II</fullName>
    </alternativeName>
    <alternativeName>
        <fullName evidence="1">Nitrogenase reductase</fullName>
    </alternativeName>
</protein>
<keyword id="KW-0004">4Fe-4S</keyword>
<keyword id="KW-0013">ADP-ribosylation</keyword>
<keyword id="KW-0067">ATP-binding</keyword>
<keyword id="KW-0408">Iron</keyword>
<keyword id="KW-0411">Iron-sulfur</keyword>
<keyword id="KW-0479">Metal-binding</keyword>
<keyword id="KW-0535">Nitrogen fixation</keyword>
<keyword id="KW-0547">Nucleotide-binding</keyword>
<keyword id="KW-0560">Oxidoreductase</keyword>
<keyword id="KW-1185">Reference proteome</keyword>
<dbReference type="EC" id="1.18.6.1" evidence="1"/>
<dbReference type="EMBL" id="CP000304">
    <property type="protein sequence ID" value="ABP79021.1"/>
    <property type="molecule type" value="Genomic_DNA"/>
</dbReference>
<dbReference type="RefSeq" id="WP_003298004.1">
    <property type="nucleotide sequence ID" value="NC_009434.1"/>
</dbReference>
<dbReference type="SMR" id="A4VJ70"/>
<dbReference type="KEGG" id="psa:PST_1326"/>
<dbReference type="eggNOG" id="COG1348">
    <property type="taxonomic scope" value="Bacteria"/>
</dbReference>
<dbReference type="HOGENOM" id="CLU_059373_0_0_6"/>
<dbReference type="Proteomes" id="UP000000233">
    <property type="component" value="Chromosome"/>
</dbReference>
<dbReference type="GO" id="GO:0051539">
    <property type="term" value="F:4 iron, 4 sulfur cluster binding"/>
    <property type="evidence" value="ECO:0007669"/>
    <property type="project" value="UniProtKB-KW"/>
</dbReference>
<dbReference type="GO" id="GO:0005524">
    <property type="term" value="F:ATP binding"/>
    <property type="evidence" value="ECO:0007669"/>
    <property type="project" value="UniProtKB-UniRule"/>
</dbReference>
<dbReference type="GO" id="GO:0046872">
    <property type="term" value="F:metal ion binding"/>
    <property type="evidence" value="ECO:0007669"/>
    <property type="project" value="UniProtKB-KW"/>
</dbReference>
<dbReference type="GO" id="GO:0016163">
    <property type="term" value="F:nitrogenase activity"/>
    <property type="evidence" value="ECO:0007669"/>
    <property type="project" value="UniProtKB-UniRule"/>
</dbReference>
<dbReference type="GO" id="GO:0009399">
    <property type="term" value="P:nitrogen fixation"/>
    <property type="evidence" value="ECO:0007669"/>
    <property type="project" value="UniProtKB-UniRule"/>
</dbReference>
<dbReference type="CDD" id="cd02040">
    <property type="entry name" value="NifH"/>
    <property type="match status" value="1"/>
</dbReference>
<dbReference type="FunFam" id="3.40.50.300:FF:001379">
    <property type="entry name" value="Nitrogenase iron protein 1"/>
    <property type="match status" value="1"/>
</dbReference>
<dbReference type="Gene3D" id="3.40.50.300">
    <property type="entry name" value="P-loop containing nucleotide triphosphate hydrolases"/>
    <property type="match status" value="1"/>
</dbReference>
<dbReference type="HAMAP" id="MF_00533">
    <property type="entry name" value="NifH"/>
    <property type="match status" value="1"/>
</dbReference>
<dbReference type="InterPro" id="IPR030655">
    <property type="entry name" value="NifH/chlL_CS"/>
</dbReference>
<dbReference type="InterPro" id="IPR000392">
    <property type="entry name" value="NifH/frxC"/>
</dbReference>
<dbReference type="InterPro" id="IPR005977">
    <property type="entry name" value="Nitrogenase_Fe_NifH"/>
</dbReference>
<dbReference type="InterPro" id="IPR027417">
    <property type="entry name" value="P-loop_NTPase"/>
</dbReference>
<dbReference type="NCBIfam" id="TIGR01287">
    <property type="entry name" value="nifH"/>
    <property type="match status" value="1"/>
</dbReference>
<dbReference type="PANTHER" id="PTHR42864">
    <property type="entry name" value="LIGHT-INDEPENDENT PROTOCHLOROPHYLLIDE REDUCTASE IRON-SULFUR ATP-BINDING PROTEIN"/>
    <property type="match status" value="1"/>
</dbReference>
<dbReference type="PANTHER" id="PTHR42864:SF2">
    <property type="entry name" value="LIGHT-INDEPENDENT PROTOCHLOROPHYLLIDE REDUCTASE IRON-SULFUR ATP-BINDING PROTEIN"/>
    <property type="match status" value="1"/>
</dbReference>
<dbReference type="Pfam" id="PF00142">
    <property type="entry name" value="Fer4_NifH"/>
    <property type="match status" value="1"/>
</dbReference>
<dbReference type="PIRSF" id="PIRSF000363">
    <property type="entry name" value="Nitrogenase_iron"/>
    <property type="match status" value="1"/>
</dbReference>
<dbReference type="PRINTS" id="PR00091">
    <property type="entry name" value="NITROGNASEII"/>
</dbReference>
<dbReference type="SUPFAM" id="SSF52540">
    <property type="entry name" value="P-loop containing nucleoside triphosphate hydrolases"/>
    <property type="match status" value="1"/>
</dbReference>
<dbReference type="PROSITE" id="PS00746">
    <property type="entry name" value="NIFH_FRXC_1"/>
    <property type="match status" value="1"/>
</dbReference>
<dbReference type="PROSITE" id="PS00692">
    <property type="entry name" value="NIFH_FRXC_2"/>
    <property type="match status" value="1"/>
</dbReference>
<dbReference type="PROSITE" id="PS51026">
    <property type="entry name" value="NIFH_FRXC_3"/>
    <property type="match status" value="1"/>
</dbReference>
<organism>
    <name type="scientific">Stutzerimonas stutzeri (strain A1501)</name>
    <name type="common">Pseudomonas stutzeri</name>
    <dbReference type="NCBI Taxonomy" id="379731"/>
    <lineage>
        <taxon>Bacteria</taxon>
        <taxon>Pseudomonadati</taxon>
        <taxon>Pseudomonadota</taxon>
        <taxon>Gammaproteobacteria</taxon>
        <taxon>Pseudomonadales</taxon>
        <taxon>Pseudomonadaceae</taxon>
        <taxon>Stutzerimonas</taxon>
    </lineage>
</organism>
<gene>
    <name evidence="1" type="primary">nifH</name>
    <name type="ordered locus">PST_1326</name>
</gene>
<evidence type="ECO:0000255" key="1">
    <source>
        <dbReference type="HAMAP-Rule" id="MF_00533"/>
    </source>
</evidence>
<sequence length="293" mass="31784">MAMRQCAIYGKGGIGKSTTTQNLVAALAELGKKVMIVGCDPKADSTRLILHSKAQNTIMEMAAEAGTVEDLELEDVLKTGYGDIKCVESGGPEPGVGCAGRGVITAINFLEEEGAYEDDLDFVFYDVLGDVVCGGFAMPIRENKAQEIYVVCSGEMMAMYAANNICKGIVKYANSGSVRLGGLICNSRNTDREDELIMALADKLGSQMIHFVPRDNVVQRAEIRRMTVIEYDPAAKQADEYRTLAKKIVENKKLVIPTPISMDELEALLMEFGIMDEEDMTIVGKTAAEEVVA</sequence>
<feature type="chain" id="PRO_1000211882" description="Nitrogenase iron protein">
    <location>
        <begin position="1"/>
        <end position="293"/>
    </location>
</feature>
<feature type="binding site" evidence="1">
    <location>
        <begin position="10"/>
        <end position="17"/>
    </location>
    <ligand>
        <name>ATP</name>
        <dbReference type="ChEBI" id="CHEBI:30616"/>
    </ligand>
</feature>
<feature type="binding site" evidence="1">
    <location>
        <position position="98"/>
    </location>
    <ligand>
        <name>[4Fe-4S] cluster</name>
        <dbReference type="ChEBI" id="CHEBI:49883"/>
        <note>ligand shared between dimeric partners</note>
    </ligand>
</feature>
<feature type="binding site" evidence="1">
    <location>
        <position position="133"/>
    </location>
    <ligand>
        <name>[4Fe-4S] cluster</name>
        <dbReference type="ChEBI" id="CHEBI:49883"/>
        <note>ligand shared between dimeric partners</note>
    </ligand>
</feature>
<feature type="modified residue" description="ADP-ribosylarginine; by dinitrogenase reductase ADP-ribosyltransferase" evidence="1">
    <location>
        <position position="101"/>
    </location>
</feature>